<protein>
    <recommendedName>
        <fullName evidence="5">Long-chain-fatty-acid--CoA ligase ACSBG2</fullName>
        <ecNumber evidence="2">6.2.1.3</ecNumber>
    </recommendedName>
    <alternativeName>
        <fullName>Acyl-CoA synthetase bubblegum family member 2</fullName>
    </alternativeName>
    <alternativeName>
        <fullName evidence="2">Arachidonate--CoA ligase ACSBG2</fullName>
        <ecNumber evidence="2">6.2.1.15</ecNumber>
    </alternativeName>
    <alternativeName>
        <fullName>Bubblegum-related protein</fullName>
    </alternativeName>
</protein>
<organism>
    <name type="scientific">Mus musculus</name>
    <name type="common">Mouse</name>
    <dbReference type="NCBI Taxonomy" id="10090"/>
    <lineage>
        <taxon>Eukaryota</taxon>
        <taxon>Metazoa</taxon>
        <taxon>Chordata</taxon>
        <taxon>Craniata</taxon>
        <taxon>Vertebrata</taxon>
        <taxon>Euteleostomi</taxon>
        <taxon>Mammalia</taxon>
        <taxon>Eutheria</taxon>
        <taxon>Euarchontoglires</taxon>
        <taxon>Glires</taxon>
        <taxon>Rodentia</taxon>
        <taxon>Myomorpha</taxon>
        <taxon>Muroidea</taxon>
        <taxon>Muridae</taxon>
        <taxon>Murinae</taxon>
        <taxon>Mus</taxon>
        <taxon>Mus</taxon>
    </lineage>
</organism>
<accession>Q2XU92</accession>
<sequence length="667" mass="74319">MTQEKKAEDLERGTDATSAVPRLWSTHCDGEVLLRLSKHGPGHETPMTIPELFQESAERFSAYPALASKNGKKWDTLTFSQYYEMCRKAAKSLIKLGLQRFQCVGILGFNSVEWVVTALGTILAGGLCVGIYATNSAEACQYVIQQANVSILIVENDQQLQKILLIPPDKMETVKAIVQYKLPLMESMANLYSWNDFMELGNDIPNIQLDRVILSQKANQCAVILYTSGTTGTPKGVLLSHDNITWTAGAMSQEMEINRVSGKQNTIVSYLPLSHIAAQLTDIWIPIKIGALTFFAQPDALRGTLVYTLQEVKPTLFMGVPRIWEKMQDTIKENVARSSRLRKKAFAWAKMLGLKVNTKRMLGKRDIPMNYRMAKALVFAKVRTSLGLDNCHAFFSSASPLSQDVSEFFLSLDIPIGEIYGMSECSGPHTVSNKSVYRVLSCGKVLSGCKNMLYNQNKEGVGEVCMWGRHVFMGYLNKEEATLEALDENGWLHSGDIGRLDSHDFLYITGRIKEILITAGGENVSPIPIETLVKEKIPIISHAMLVGDKAKFLCMLLTLKCETDRKSGEPLNKLSVEAKSFCQMLGSQATTVSDILKSRDQVVYTAIQYGIDIVNQQAMSDSHRIRKWIILEKDFSIQGGELGPTSKLKRSVITQKYKAQIDSMYLS</sequence>
<dbReference type="EC" id="6.2.1.3" evidence="2"/>
<dbReference type="EC" id="6.2.1.15" evidence="2"/>
<dbReference type="EMBL" id="DQ250679">
    <property type="protein sequence ID" value="ABB54488.1"/>
    <property type="molecule type" value="mRNA"/>
</dbReference>
<dbReference type="CCDS" id="CCDS28916.1"/>
<dbReference type="RefSeq" id="NP_001034203.1">
    <property type="nucleotide sequence ID" value="NM_001039114.1"/>
</dbReference>
<dbReference type="SMR" id="Q2XU92"/>
<dbReference type="BioGRID" id="236667">
    <property type="interactions" value="1"/>
</dbReference>
<dbReference type="FunCoup" id="Q2XU92">
    <property type="interactions" value="376"/>
</dbReference>
<dbReference type="STRING" id="10090.ENSMUSP00000042352"/>
<dbReference type="iPTMnet" id="Q2XU92"/>
<dbReference type="PhosphoSitePlus" id="Q2XU92"/>
<dbReference type="jPOST" id="Q2XU92"/>
<dbReference type="PaxDb" id="10090-ENSMUSP00000042352"/>
<dbReference type="ProteomicsDB" id="285639"/>
<dbReference type="Antibodypedia" id="24085">
    <property type="antibodies" value="133 antibodies from 22 providers"/>
</dbReference>
<dbReference type="Ensembl" id="ENSMUST00000043062.5">
    <property type="protein sequence ID" value="ENSMUSP00000042352.5"/>
    <property type="gene ID" value="ENSMUSG00000024207.9"/>
</dbReference>
<dbReference type="GeneID" id="328845"/>
<dbReference type="KEGG" id="mmu:328845"/>
<dbReference type="UCSC" id="uc008ddi.1">
    <property type="organism name" value="mouse"/>
</dbReference>
<dbReference type="AGR" id="MGI:3587728"/>
<dbReference type="CTD" id="81616"/>
<dbReference type="MGI" id="MGI:3587728">
    <property type="gene designation" value="Acsbg2"/>
</dbReference>
<dbReference type="VEuPathDB" id="HostDB:ENSMUSG00000024207"/>
<dbReference type="eggNOG" id="KOG1256">
    <property type="taxonomic scope" value="Eukaryota"/>
</dbReference>
<dbReference type="GeneTree" id="ENSGT00940000155332"/>
<dbReference type="HOGENOM" id="CLU_000022_45_5_1"/>
<dbReference type="InParanoid" id="Q2XU92"/>
<dbReference type="OMA" id="ETCAYVC"/>
<dbReference type="OrthoDB" id="3633556at2759"/>
<dbReference type="PhylomeDB" id="Q2XU92"/>
<dbReference type="TreeFam" id="TF354286"/>
<dbReference type="Reactome" id="R-MMU-75876">
    <property type="pathway name" value="Synthesis of very long-chain fatty acyl-CoAs"/>
</dbReference>
<dbReference type="BioGRID-ORCS" id="328845">
    <property type="hits" value="3 hits in 78 CRISPR screens"/>
</dbReference>
<dbReference type="ChiTaRS" id="Acsbg2">
    <property type="organism name" value="mouse"/>
</dbReference>
<dbReference type="PRO" id="PR:Q2XU92"/>
<dbReference type="Proteomes" id="UP000000589">
    <property type="component" value="Chromosome 17"/>
</dbReference>
<dbReference type="RNAct" id="Q2XU92">
    <property type="molecule type" value="protein"/>
</dbReference>
<dbReference type="Bgee" id="ENSMUSG00000024207">
    <property type="expression patterns" value="Expressed in seminiferous tubule of testis and 7 other cell types or tissues"/>
</dbReference>
<dbReference type="GO" id="GO:0005737">
    <property type="term" value="C:cytoplasm"/>
    <property type="evidence" value="ECO:0000314"/>
    <property type="project" value="MGI"/>
</dbReference>
<dbReference type="GO" id="GO:0005829">
    <property type="term" value="C:cytosol"/>
    <property type="evidence" value="ECO:0000314"/>
    <property type="project" value="MGI"/>
</dbReference>
<dbReference type="GO" id="GO:0016020">
    <property type="term" value="C:membrane"/>
    <property type="evidence" value="ECO:0007669"/>
    <property type="project" value="UniProtKB-SubCell"/>
</dbReference>
<dbReference type="GO" id="GO:0005739">
    <property type="term" value="C:mitochondrion"/>
    <property type="evidence" value="ECO:0000266"/>
    <property type="project" value="MGI"/>
</dbReference>
<dbReference type="GO" id="GO:0047676">
    <property type="term" value="F:arachidonate-CoA ligase activity"/>
    <property type="evidence" value="ECO:0000250"/>
    <property type="project" value="UniProtKB"/>
</dbReference>
<dbReference type="GO" id="GO:0005524">
    <property type="term" value="F:ATP binding"/>
    <property type="evidence" value="ECO:0007669"/>
    <property type="project" value="UniProtKB-KW"/>
</dbReference>
<dbReference type="GO" id="GO:0047617">
    <property type="term" value="F:fatty acyl-CoA hydrolase activity"/>
    <property type="evidence" value="ECO:0000266"/>
    <property type="project" value="MGI"/>
</dbReference>
<dbReference type="GO" id="GO:0004467">
    <property type="term" value="F:long-chain fatty acid-CoA ligase activity"/>
    <property type="evidence" value="ECO:0000314"/>
    <property type="project" value="MGI"/>
</dbReference>
<dbReference type="GO" id="GO:0030154">
    <property type="term" value="P:cell differentiation"/>
    <property type="evidence" value="ECO:0007669"/>
    <property type="project" value="UniProtKB-KW"/>
</dbReference>
<dbReference type="GO" id="GO:0006635">
    <property type="term" value="P:fatty acid beta-oxidation"/>
    <property type="evidence" value="ECO:0000305"/>
    <property type="project" value="MGI"/>
</dbReference>
<dbReference type="GO" id="GO:0006631">
    <property type="term" value="P:fatty acid metabolic process"/>
    <property type="evidence" value="ECO:0000314"/>
    <property type="project" value="MGI"/>
</dbReference>
<dbReference type="GO" id="GO:0007283">
    <property type="term" value="P:spermatogenesis"/>
    <property type="evidence" value="ECO:0007669"/>
    <property type="project" value="UniProtKB-KW"/>
</dbReference>
<dbReference type="CDD" id="cd05933">
    <property type="entry name" value="ACSBG_like"/>
    <property type="match status" value="1"/>
</dbReference>
<dbReference type="Gene3D" id="3.40.50.12780">
    <property type="entry name" value="N-terminal domain of ligase-like"/>
    <property type="match status" value="1"/>
</dbReference>
<dbReference type="InterPro" id="IPR020845">
    <property type="entry name" value="AMP-binding_CS"/>
</dbReference>
<dbReference type="InterPro" id="IPR000873">
    <property type="entry name" value="AMP-dep_synth/lig_dom"/>
</dbReference>
<dbReference type="InterPro" id="IPR042099">
    <property type="entry name" value="ANL_N_sf"/>
</dbReference>
<dbReference type="PANTHER" id="PTHR43272:SF101">
    <property type="entry name" value="ACYL-COA SYNTHETASE BUBBLEGUM FAMILY MEMBER 2-RELATED"/>
    <property type="match status" value="1"/>
</dbReference>
<dbReference type="PANTHER" id="PTHR43272">
    <property type="entry name" value="LONG-CHAIN-FATTY-ACID--COA LIGASE"/>
    <property type="match status" value="1"/>
</dbReference>
<dbReference type="Pfam" id="PF00501">
    <property type="entry name" value="AMP-binding"/>
    <property type="match status" value="1"/>
</dbReference>
<dbReference type="Pfam" id="PF23562">
    <property type="entry name" value="AMP-binding_C_3"/>
    <property type="match status" value="1"/>
</dbReference>
<dbReference type="SUPFAM" id="SSF56801">
    <property type="entry name" value="Acetyl-CoA synthetase-like"/>
    <property type="match status" value="1"/>
</dbReference>
<dbReference type="PROSITE" id="PS00455">
    <property type="entry name" value="AMP_BINDING"/>
    <property type="match status" value="1"/>
</dbReference>
<comment type="function">
    <text evidence="2">Catalyzes the conversion of fatty acids such as long chain and very long-chain fatty acids to their active form acyl-CoAs for both synthesis of cellular lipids, and degradation via beta-oxidation. Can activate diverse saturated, monosaturated and polyunsaturated fatty acids. Has increased ability to activate oleic and linoleic acid. May play a role in spermatogenesis.</text>
</comment>
<comment type="catalytic activity">
    <reaction evidence="2">
        <text>a long-chain fatty acid + ATP + CoA = a long-chain fatty acyl-CoA + AMP + diphosphate</text>
        <dbReference type="Rhea" id="RHEA:15421"/>
        <dbReference type="ChEBI" id="CHEBI:30616"/>
        <dbReference type="ChEBI" id="CHEBI:33019"/>
        <dbReference type="ChEBI" id="CHEBI:57287"/>
        <dbReference type="ChEBI" id="CHEBI:57560"/>
        <dbReference type="ChEBI" id="CHEBI:83139"/>
        <dbReference type="ChEBI" id="CHEBI:456215"/>
        <dbReference type="EC" id="6.2.1.3"/>
    </reaction>
    <physiologicalReaction direction="left-to-right" evidence="2">
        <dbReference type="Rhea" id="RHEA:15422"/>
    </physiologicalReaction>
</comment>
<comment type="catalytic activity">
    <reaction evidence="2">
        <text>(5Z,8Z,11Z,14Z)-eicosatetraenoate + ATP + CoA = (5Z,8Z,11Z,14Z)-eicosatetraenoyl-CoA + AMP + diphosphate</text>
        <dbReference type="Rhea" id="RHEA:19713"/>
        <dbReference type="ChEBI" id="CHEBI:30616"/>
        <dbReference type="ChEBI" id="CHEBI:32395"/>
        <dbReference type="ChEBI" id="CHEBI:33019"/>
        <dbReference type="ChEBI" id="CHEBI:57287"/>
        <dbReference type="ChEBI" id="CHEBI:57368"/>
        <dbReference type="ChEBI" id="CHEBI:456215"/>
        <dbReference type="EC" id="6.2.1.15"/>
    </reaction>
    <physiologicalReaction direction="left-to-right" evidence="2">
        <dbReference type="Rhea" id="RHEA:19714"/>
    </physiologicalReaction>
</comment>
<comment type="catalytic activity">
    <reaction evidence="2">
        <text>hexadecanoate + ATP + CoA = hexadecanoyl-CoA + AMP + diphosphate</text>
        <dbReference type="Rhea" id="RHEA:30751"/>
        <dbReference type="ChEBI" id="CHEBI:7896"/>
        <dbReference type="ChEBI" id="CHEBI:30616"/>
        <dbReference type="ChEBI" id="CHEBI:33019"/>
        <dbReference type="ChEBI" id="CHEBI:57287"/>
        <dbReference type="ChEBI" id="CHEBI:57379"/>
        <dbReference type="ChEBI" id="CHEBI:456215"/>
    </reaction>
    <physiologicalReaction direction="left-to-right" evidence="2">
        <dbReference type="Rhea" id="RHEA:30752"/>
    </physiologicalReaction>
</comment>
<comment type="catalytic activity">
    <reaction evidence="2">
        <text>(9Z)-octadecenoate + ATP + CoA = (9Z)-octadecenoyl-CoA + AMP + diphosphate</text>
        <dbReference type="Rhea" id="RHEA:33607"/>
        <dbReference type="ChEBI" id="CHEBI:30616"/>
        <dbReference type="ChEBI" id="CHEBI:30823"/>
        <dbReference type="ChEBI" id="CHEBI:33019"/>
        <dbReference type="ChEBI" id="CHEBI:57287"/>
        <dbReference type="ChEBI" id="CHEBI:57387"/>
        <dbReference type="ChEBI" id="CHEBI:456215"/>
    </reaction>
    <physiologicalReaction direction="left-to-right" evidence="2">
        <dbReference type="Rhea" id="RHEA:33608"/>
    </physiologicalReaction>
</comment>
<comment type="catalytic activity">
    <reaction evidence="2">
        <text>(9Z,12Z)-octadecadienoate + ATP + CoA = (9Z,12Z)-octadecadienoyl-CoA + AMP + diphosphate</text>
        <dbReference type="Rhea" id="RHEA:33651"/>
        <dbReference type="ChEBI" id="CHEBI:30245"/>
        <dbReference type="ChEBI" id="CHEBI:30616"/>
        <dbReference type="ChEBI" id="CHEBI:33019"/>
        <dbReference type="ChEBI" id="CHEBI:57287"/>
        <dbReference type="ChEBI" id="CHEBI:57383"/>
        <dbReference type="ChEBI" id="CHEBI:456215"/>
    </reaction>
    <physiologicalReaction direction="left-to-right" evidence="2">
        <dbReference type="Rhea" id="RHEA:33652"/>
    </physiologicalReaction>
</comment>
<comment type="catalytic activity">
    <reaction evidence="2">
        <text>tetracosanoate + ATP + CoA = tetracosanoyl-CoA + AMP + diphosphate</text>
        <dbReference type="Rhea" id="RHEA:33639"/>
        <dbReference type="ChEBI" id="CHEBI:30616"/>
        <dbReference type="ChEBI" id="CHEBI:31014"/>
        <dbReference type="ChEBI" id="CHEBI:33019"/>
        <dbReference type="ChEBI" id="CHEBI:57287"/>
        <dbReference type="ChEBI" id="CHEBI:65052"/>
        <dbReference type="ChEBI" id="CHEBI:456215"/>
    </reaction>
    <physiologicalReaction direction="left-to-right" evidence="2">
        <dbReference type="Rhea" id="RHEA:33640"/>
    </physiologicalReaction>
</comment>
<comment type="subcellular location">
    <subcellularLocation>
        <location>Cytoplasm</location>
    </subcellularLocation>
    <subcellularLocation>
        <location>Membrane</location>
        <topology>Peripheral membrane protein</topology>
    </subcellularLocation>
</comment>
<comment type="tissue specificity">
    <text evidence="3 4">Testis- and brainstem-specific. Expressed in pubertal and adult testis. Enriched in germ cells and Sertoli cells while present at a lower level in Leydig cells. Present in testicular Sertoli cells and large motoneurons in the medulla oblongata and cervical spinal cord (at protein level).</text>
</comment>
<comment type="similarity">
    <text evidence="5">Belongs to the ATP-dependent AMP-binding enzyme family. Bubblegum subfamily.</text>
</comment>
<evidence type="ECO:0000250" key="1"/>
<evidence type="ECO:0000250" key="2">
    <source>
        <dbReference type="UniProtKB" id="Q5FVE4"/>
    </source>
</evidence>
<evidence type="ECO:0000269" key="3">
    <source>
    </source>
</evidence>
<evidence type="ECO:0000269" key="4">
    <source>
    </source>
</evidence>
<evidence type="ECO:0000305" key="5"/>
<evidence type="ECO:0000312" key="6">
    <source>
        <dbReference type="MGI" id="MGI:3587728"/>
    </source>
</evidence>
<reference key="1">
    <citation type="journal article" date="2006" name="J. Biol. Chem.">
        <title>The second member of the human and murine 'bubblegum' family is a testis- and brainstem-specific acyl-CoA synthetase.</title>
        <authorList>
            <person name="Pei Z."/>
            <person name="Jia Z."/>
            <person name="Watkins P.A."/>
        </authorList>
    </citation>
    <scope>NUCLEOTIDE SEQUENCE [MRNA]</scope>
    <scope>TISSUE SPECIFICITY</scope>
    <source>
        <strain>129/SvEv</strain>
    </source>
</reference>
<reference key="2">
    <citation type="journal article" date="2006" name="Arch. Biochem. Biophys.">
        <title>A novel mammalian bubblegum-related acyl-CoA synthetase restricted to testes and possibly involved in spermatogenesis.</title>
        <authorList>
            <person name="Fraisl P."/>
            <person name="Tanaka H."/>
            <person name="Forss-Petter S."/>
            <person name="Lassmann H."/>
            <person name="Nishimune Y."/>
            <person name="Berger J."/>
        </authorList>
    </citation>
    <scope>TISSUE SPECIFICITY</scope>
</reference>
<keyword id="KW-0067">ATP-binding</keyword>
<keyword id="KW-0963">Cytoplasm</keyword>
<keyword id="KW-0217">Developmental protein</keyword>
<keyword id="KW-0221">Differentiation</keyword>
<keyword id="KW-0276">Fatty acid metabolism</keyword>
<keyword id="KW-0436">Ligase</keyword>
<keyword id="KW-0443">Lipid metabolism</keyword>
<keyword id="KW-0472">Membrane</keyword>
<keyword id="KW-0547">Nucleotide-binding</keyword>
<keyword id="KW-1185">Reference proteome</keyword>
<keyword id="KW-0744">Spermatogenesis</keyword>
<gene>
    <name evidence="6" type="primary">Acsbg2</name>
    <name type="synonym">Bgr</name>
</gene>
<name>ACBG2_MOUSE</name>
<feature type="chain" id="PRO_0000315813" description="Long-chain-fatty-acid--CoA ligase ACSBG2">
    <location>
        <begin position="1"/>
        <end position="667"/>
    </location>
</feature>
<feature type="binding site" evidence="1">
    <location>
        <begin position="227"/>
        <end position="235"/>
    </location>
    <ligand>
        <name>ATP</name>
        <dbReference type="ChEBI" id="CHEBI:30616"/>
    </ligand>
</feature>
<feature type="binding site" evidence="1">
    <location>
        <begin position="418"/>
        <end position="423"/>
    </location>
    <ligand>
        <name>ATP</name>
        <dbReference type="ChEBI" id="CHEBI:30616"/>
    </ligand>
</feature>
<feature type="binding site" evidence="1">
    <location>
        <position position="496"/>
    </location>
    <ligand>
        <name>ATP</name>
        <dbReference type="ChEBI" id="CHEBI:30616"/>
    </ligand>
</feature>
<feature type="binding site" evidence="1">
    <location>
        <position position="511"/>
    </location>
    <ligand>
        <name>ATP</name>
        <dbReference type="ChEBI" id="CHEBI:30616"/>
    </ligand>
</feature>
<feature type="binding site" evidence="1">
    <location>
        <position position="624"/>
    </location>
    <ligand>
        <name>ATP</name>
        <dbReference type="ChEBI" id="CHEBI:30616"/>
    </ligand>
</feature>
<proteinExistence type="evidence at protein level"/>